<organism>
    <name type="scientific">Bacillus licheniformis (strain ATCC 14580 / DSM 13 / JCM 2505 / CCUG 7422 / NBRC 12200 / NCIMB 9375 / NCTC 10341 / NRRL NRS-1264 / Gibson 46)</name>
    <dbReference type="NCBI Taxonomy" id="279010"/>
    <lineage>
        <taxon>Bacteria</taxon>
        <taxon>Bacillati</taxon>
        <taxon>Bacillota</taxon>
        <taxon>Bacilli</taxon>
        <taxon>Bacillales</taxon>
        <taxon>Bacillaceae</taxon>
        <taxon>Bacillus</taxon>
    </lineage>
</organism>
<comment type="function">
    <text evidence="1">DNA-dependent RNA polymerase catalyzes the transcription of DNA into RNA using the four ribonucleoside triphosphates as substrates.</text>
</comment>
<comment type="catalytic activity">
    <reaction evidence="1">
        <text>RNA(n) + a ribonucleoside 5'-triphosphate = RNA(n+1) + diphosphate</text>
        <dbReference type="Rhea" id="RHEA:21248"/>
        <dbReference type="Rhea" id="RHEA-COMP:14527"/>
        <dbReference type="Rhea" id="RHEA-COMP:17342"/>
        <dbReference type="ChEBI" id="CHEBI:33019"/>
        <dbReference type="ChEBI" id="CHEBI:61557"/>
        <dbReference type="ChEBI" id="CHEBI:140395"/>
        <dbReference type="EC" id="2.7.7.6"/>
    </reaction>
</comment>
<comment type="subunit">
    <text evidence="1">Homodimer. The RNAP catalytic core consists of 2 alpha, 1 beta, 1 beta' and 1 omega subunit. When a sigma factor is associated with the core the holoenzyme is formed, which can initiate transcription.</text>
</comment>
<comment type="domain">
    <text evidence="1">The N-terminal domain is essential for RNAP assembly and basal transcription, whereas the C-terminal domain is involved in interaction with transcriptional regulators and with upstream promoter elements.</text>
</comment>
<comment type="similarity">
    <text evidence="1">Belongs to the RNA polymerase alpha chain family.</text>
</comment>
<gene>
    <name evidence="1" type="primary">rpoA</name>
    <name type="ordered locus">BLi00161</name>
    <name type="ordered locus">BL01025</name>
</gene>
<feature type="chain" id="PRO_0000225257" description="DNA-directed RNA polymerase subunit alpha">
    <location>
        <begin position="1"/>
        <end position="314"/>
    </location>
</feature>
<feature type="region of interest" description="Alpha N-terminal domain (alpha-NTD)" evidence="1">
    <location>
        <begin position="1"/>
        <end position="228"/>
    </location>
</feature>
<feature type="region of interest" description="Alpha C-terminal domain (alpha-CTD)" evidence="1">
    <location>
        <begin position="245"/>
        <end position="314"/>
    </location>
</feature>
<keyword id="KW-0240">DNA-directed RNA polymerase</keyword>
<keyword id="KW-0548">Nucleotidyltransferase</keyword>
<keyword id="KW-1185">Reference proteome</keyword>
<keyword id="KW-0804">Transcription</keyword>
<keyword id="KW-0808">Transferase</keyword>
<dbReference type="EC" id="2.7.7.6" evidence="1"/>
<dbReference type="EMBL" id="AE017333">
    <property type="protein sequence ID" value="AAU39135.1"/>
    <property type="molecule type" value="Genomic_DNA"/>
</dbReference>
<dbReference type="EMBL" id="CP000002">
    <property type="protein sequence ID" value="AAU21790.1"/>
    <property type="molecule type" value="Genomic_DNA"/>
</dbReference>
<dbReference type="RefSeq" id="WP_003178382.1">
    <property type="nucleotide sequence ID" value="NC_006322.1"/>
</dbReference>
<dbReference type="SMR" id="Q65P79"/>
<dbReference type="STRING" id="279010.BL01025"/>
<dbReference type="KEGG" id="bld:BLi00161"/>
<dbReference type="KEGG" id="bli:BL01025"/>
<dbReference type="eggNOG" id="COG0202">
    <property type="taxonomic scope" value="Bacteria"/>
</dbReference>
<dbReference type="HOGENOM" id="CLU_053084_0_1_9"/>
<dbReference type="Proteomes" id="UP000000606">
    <property type="component" value="Chromosome"/>
</dbReference>
<dbReference type="GO" id="GO:0005737">
    <property type="term" value="C:cytoplasm"/>
    <property type="evidence" value="ECO:0007669"/>
    <property type="project" value="UniProtKB-ARBA"/>
</dbReference>
<dbReference type="GO" id="GO:0000428">
    <property type="term" value="C:DNA-directed RNA polymerase complex"/>
    <property type="evidence" value="ECO:0007669"/>
    <property type="project" value="UniProtKB-KW"/>
</dbReference>
<dbReference type="GO" id="GO:0003677">
    <property type="term" value="F:DNA binding"/>
    <property type="evidence" value="ECO:0007669"/>
    <property type="project" value="UniProtKB-UniRule"/>
</dbReference>
<dbReference type="GO" id="GO:0003899">
    <property type="term" value="F:DNA-directed RNA polymerase activity"/>
    <property type="evidence" value="ECO:0007669"/>
    <property type="project" value="UniProtKB-UniRule"/>
</dbReference>
<dbReference type="GO" id="GO:0046983">
    <property type="term" value="F:protein dimerization activity"/>
    <property type="evidence" value="ECO:0007669"/>
    <property type="project" value="InterPro"/>
</dbReference>
<dbReference type="GO" id="GO:0006351">
    <property type="term" value="P:DNA-templated transcription"/>
    <property type="evidence" value="ECO:0007669"/>
    <property type="project" value="UniProtKB-UniRule"/>
</dbReference>
<dbReference type="CDD" id="cd06928">
    <property type="entry name" value="RNAP_alpha_NTD"/>
    <property type="match status" value="1"/>
</dbReference>
<dbReference type="FunFam" id="1.10.150.20:FF:000001">
    <property type="entry name" value="DNA-directed RNA polymerase subunit alpha"/>
    <property type="match status" value="1"/>
</dbReference>
<dbReference type="FunFam" id="2.170.120.12:FF:000001">
    <property type="entry name" value="DNA-directed RNA polymerase subunit alpha"/>
    <property type="match status" value="1"/>
</dbReference>
<dbReference type="Gene3D" id="1.10.150.20">
    <property type="entry name" value="5' to 3' exonuclease, C-terminal subdomain"/>
    <property type="match status" value="1"/>
</dbReference>
<dbReference type="Gene3D" id="2.170.120.12">
    <property type="entry name" value="DNA-directed RNA polymerase, insert domain"/>
    <property type="match status" value="1"/>
</dbReference>
<dbReference type="Gene3D" id="3.30.1360.10">
    <property type="entry name" value="RNA polymerase, RBP11-like subunit"/>
    <property type="match status" value="1"/>
</dbReference>
<dbReference type="HAMAP" id="MF_00059">
    <property type="entry name" value="RNApol_bact_RpoA"/>
    <property type="match status" value="1"/>
</dbReference>
<dbReference type="InterPro" id="IPR011262">
    <property type="entry name" value="DNA-dir_RNA_pol_insert"/>
</dbReference>
<dbReference type="InterPro" id="IPR011263">
    <property type="entry name" value="DNA-dir_RNA_pol_RpoA/D/Rpb3"/>
</dbReference>
<dbReference type="InterPro" id="IPR011773">
    <property type="entry name" value="DNA-dir_RpoA"/>
</dbReference>
<dbReference type="InterPro" id="IPR036603">
    <property type="entry name" value="RBP11-like"/>
</dbReference>
<dbReference type="InterPro" id="IPR011260">
    <property type="entry name" value="RNAP_asu_C"/>
</dbReference>
<dbReference type="InterPro" id="IPR036643">
    <property type="entry name" value="RNApol_insert_sf"/>
</dbReference>
<dbReference type="NCBIfam" id="NF003513">
    <property type="entry name" value="PRK05182.1-2"/>
    <property type="match status" value="1"/>
</dbReference>
<dbReference type="NCBIfam" id="NF003515">
    <property type="entry name" value="PRK05182.2-1"/>
    <property type="match status" value="1"/>
</dbReference>
<dbReference type="NCBIfam" id="NF003516">
    <property type="entry name" value="PRK05182.2-2"/>
    <property type="match status" value="1"/>
</dbReference>
<dbReference type="NCBIfam" id="NF003519">
    <property type="entry name" value="PRK05182.2-5"/>
    <property type="match status" value="1"/>
</dbReference>
<dbReference type="NCBIfam" id="TIGR02027">
    <property type="entry name" value="rpoA"/>
    <property type="match status" value="1"/>
</dbReference>
<dbReference type="Pfam" id="PF01000">
    <property type="entry name" value="RNA_pol_A_bac"/>
    <property type="match status" value="1"/>
</dbReference>
<dbReference type="Pfam" id="PF03118">
    <property type="entry name" value="RNA_pol_A_CTD"/>
    <property type="match status" value="1"/>
</dbReference>
<dbReference type="Pfam" id="PF01193">
    <property type="entry name" value="RNA_pol_L"/>
    <property type="match status" value="1"/>
</dbReference>
<dbReference type="SMART" id="SM00662">
    <property type="entry name" value="RPOLD"/>
    <property type="match status" value="1"/>
</dbReference>
<dbReference type="SUPFAM" id="SSF47789">
    <property type="entry name" value="C-terminal domain of RNA polymerase alpha subunit"/>
    <property type="match status" value="1"/>
</dbReference>
<dbReference type="SUPFAM" id="SSF56553">
    <property type="entry name" value="Insert subdomain of RNA polymerase alpha subunit"/>
    <property type="match status" value="1"/>
</dbReference>
<dbReference type="SUPFAM" id="SSF55257">
    <property type="entry name" value="RBP11-like subunits of RNA polymerase"/>
    <property type="match status" value="1"/>
</dbReference>
<evidence type="ECO:0000255" key="1">
    <source>
        <dbReference type="HAMAP-Rule" id="MF_00059"/>
    </source>
</evidence>
<name>RPOA_BACLD</name>
<sequence length="314" mass="34832">MIEIEKPKIETVEISDDAKYGKFVVEPLERGYGTTLGNSLRRILLSSLPGAAVTSIQIDGVLHEFSTIEGVVEDVTTIILNIKKLALKIYSEEEKTLEIDVQGEGVVTAADITHDSDVEILNPDLHIATLGQNASFRVRLTAQRGRGYTPADANKRDDQPIGVIPIDSIFTPVSRVSYQVENTRVGQITNYDKLTLDVWTDGSTGPKEAIALGSKILTEHLNIFVGLTDEAQHAEIMVEKEEDQKEKVLEMTIEELDLSVRSYNCLKRAGINTVQELANKTEEDMMKVRNLGRKSLEEVKAKLEELGLGLRKDD</sequence>
<accession>Q65P79</accession>
<accession>Q62ZL8</accession>
<reference key="1">
    <citation type="journal article" date="2004" name="J. Mol. Microbiol. Biotechnol.">
        <title>The complete genome sequence of Bacillus licheniformis DSM13, an organism with great industrial potential.</title>
        <authorList>
            <person name="Veith B."/>
            <person name="Herzberg C."/>
            <person name="Steckel S."/>
            <person name="Feesche J."/>
            <person name="Maurer K.H."/>
            <person name="Ehrenreich P."/>
            <person name="Baeumer S."/>
            <person name="Henne A."/>
            <person name="Liesegang H."/>
            <person name="Merkl R."/>
            <person name="Ehrenreich A."/>
            <person name="Gottschalk G."/>
        </authorList>
    </citation>
    <scope>NUCLEOTIDE SEQUENCE [LARGE SCALE GENOMIC DNA]</scope>
    <source>
        <strain>ATCC 14580 / DSM 13 / JCM 2505 / CCUG 7422 / NBRC 12200 / NCIMB 9375 / NCTC 10341 / NRRL NRS-1264 / Gibson 46</strain>
    </source>
</reference>
<reference key="2">
    <citation type="journal article" date="2004" name="Genome Biol.">
        <title>Complete genome sequence of the industrial bacterium Bacillus licheniformis and comparisons with closely related Bacillus species.</title>
        <authorList>
            <person name="Rey M.W."/>
            <person name="Ramaiya P."/>
            <person name="Nelson B.A."/>
            <person name="Brody-Karpin S.D."/>
            <person name="Zaretsky E.J."/>
            <person name="Tang M."/>
            <person name="Lopez de Leon A."/>
            <person name="Xiang H."/>
            <person name="Gusti V."/>
            <person name="Clausen I.G."/>
            <person name="Olsen P.B."/>
            <person name="Rasmussen M.D."/>
            <person name="Andersen J.T."/>
            <person name="Joergensen P.L."/>
            <person name="Larsen T.S."/>
            <person name="Sorokin A."/>
            <person name="Bolotin A."/>
            <person name="Lapidus A."/>
            <person name="Galleron N."/>
            <person name="Ehrlich S.D."/>
            <person name="Berka R.M."/>
        </authorList>
    </citation>
    <scope>NUCLEOTIDE SEQUENCE [LARGE SCALE GENOMIC DNA]</scope>
    <source>
        <strain>ATCC 14580 / DSM 13 / JCM 2505 / CCUG 7422 / NBRC 12200 / NCIMB 9375 / NCTC 10341 / NRRL NRS-1264 / Gibson 46</strain>
    </source>
</reference>
<proteinExistence type="inferred from homology"/>
<protein>
    <recommendedName>
        <fullName evidence="1">DNA-directed RNA polymerase subunit alpha</fullName>
        <shortName evidence="1">RNAP subunit alpha</shortName>
        <ecNumber evidence="1">2.7.7.6</ecNumber>
    </recommendedName>
    <alternativeName>
        <fullName evidence="1">RNA polymerase subunit alpha</fullName>
    </alternativeName>
    <alternativeName>
        <fullName evidence="1">Transcriptase subunit alpha</fullName>
    </alternativeName>
</protein>